<proteinExistence type="inferred from homology"/>
<gene>
    <name evidence="1" type="primary">pheS</name>
    <name type="ordered locus">plu2665</name>
</gene>
<name>SYFA_PHOLL</name>
<feature type="chain" id="PRO_0000126739" description="Phenylalanine--tRNA ligase alpha subunit">
    <location>
        <begin position="1"/>
        <end position="327"/>
    </location>
</feature>
<feature type="binding site" evidence="1">
    <location>
        <position position="252"/>
    </location>
    <ligand>
        <name>Mg(2+)</name>
        <dbReference type="ChEBI" id="CHEBI:18420"/>
        <note>shared with beta subunit</note>
    </ligand>
</feature>
<dbReference type="EC" id="6.1.1.20" evidence="1"/>
<dbReference type="EMBL" id="BX571867">
    <property type="protein sequence ID" value="CAE15039.1"/>
    <property type="molecule type" value="Genomic_DNA"/>
</dbReference>
<dbReference type="RefSeq" id="WP_011146887.1">
    <property type="nucleotide sequence ID" value="NC_005126.1"/>
</dbReference>
<dbReference type="SMR" id="Q7N3Q0"/>
<dbReference type="STRING" id="243265.plu2665"/>
<dbReference type="GeneID" id="48848928"/>
<dbReference type="KEGG" id="plu:plu2665"/>
<dbReference type="eggNOG" id="COG0016">
    <property type="taxonomic scope" value="Bacteria"/>
</dbReference>
<dbReference type="HOGENOM" id="CLU_025086_0_1_6"/>
<dbReference type="OrthoDB" id="9800719at2"/>
<dbReference type="Proteomes" id="UP000002514">
    <property type="component" value="Chromosome"/>
</dbReference>
<dbReference type="GO" id="GO:0005737">
    <property type="term" value="C:cytoplasm"/>
    <property type="evidence" value="ECO:0007669"/>
    <property type="project" value="UniProtKB-SubCell"/>
</dbReference>
<dbReference type="GO" id="GO:0005524">
    <property type="term" value="F:ATP binding"/>
    <property type="evidence" value="ECO:0007669"/>
    <property type="project" value="UniProtKB-UniRule"/>
</dbReference>
<dbReference type="GO" id="GO:0000287">
    <property type="term" value="F:magnesium ion binding"/>
    <property type="evidence" value="ECO:0007669"/>
    <property type="project" value="UniProtKB-UniRule"/>
</dbReference>
<dbReference type="GO" id="GO:0004826">
    <property type="term" value="F:phenylalanine-tRNA ligase activity"/>
    <property type="evidence" value="ECO:0007669"/>
    <property type="project" value="UniProtKB-UniRule"/>
</dbReference>
<dbReference type="GO" id="GO:0000049">
    <property type="term" value="F:tRNA binding"/>
    <property type="evidence" value="ECO:0007669"/>
    <property type="project" value="InterPro"/>
</dbReference>
<dbReference type="GO" id="GO:0006432">
    <property type="term" value="P:phenylalanyl-tRNA aminoacylation"/>
    <property type="evidence" value="ECO:0007669"/>
    <property type="project" value="UniProtKB-UniRule"/>
</dbReference>
<dbReference type="CDD" id="cd00496">
    <property type="entry name" value="PheRS_alpha_core"/>
    <property type="match status" value="1"/>
</dbReference>
<dbReference type="FunFam" id="3.30.930.10:FF:000003">
    <property type="entry name" value="Phenylalanine--tRNA ligase alpha subunit"/>
    <property type="match status" value="1"/>
</dbReference>
<dbReference type="Gene3D" id="3.30.930.10">
    <property type="entry name" value="Bira Bifunctional Protein, Domain 2"/>
    <property type="match status" value="1"/>
</dbReference>
<dbReference type="HAMAP" id="MF_00281">
    <property type="entry name" value="Phe_tRNA_synth_alpha1"/>
    <property type="match status" value="1"/>
</dbReference>
<dbReference type="InterPro" id="IPR006195">
    <property type="entry name" value="aa-tRNA-synth_II"/>
</dbReference>
<dbReference type="InterPro" id="IPR045864">
    <property type="entry name" value="aa-tRNA-synth_II/BPL/LPL"/>
</dbReference>
<dbReference type="InterPro" id="IPR004529">
    <property type="entry name" value="Phe-tRNA-synth_IIc_asu"/>
</dbReference>
<dbReference type="InterPro" id="IPR004188">
    <property type="entry name" value="Phe-tRNA_ligase_II_N"/>
</dbReference>
<dbReference type="InterPro" id="IPR022911">
    <property type="entry name" value="Phe_tRNA_ligase_alpha1_bac"/>
</dbReference>
<dbReference type="InterPro" id="IPR002319">
    <property type="entry name" value="Phenylalanyl-tRNA_Synthase"/>
</dbReference>
<dbReference type="InterPro" id="IPR010978">
    <property type="entry name" value="tRNA-bd_arm"/>
</dbReference>
<dbReference type="NCBIfam" id="TIGR00468">
    <property type="entry name" value="pheS"/>
    <property type="match status" value="1"/>
</dbReference>
<dbReference type="PANTHER" id="PTHR11538:SF41">
    <property type="entry name" value="PHENYLALANINE--TRNA LIGASE, MITOCHONDRIAL"/>
    <property type="match status" value="1"/>
</dbReference>
<dbReference type="PANTHER" id="PTHR11538">
    <property type="entry name" value="PHENYLALANYL-TRNA SYNTHETASE"/>
    <property type="match status" value="1"/>
</dbReference>
<dbReference type="Pfam" id="PF02912">
    <property type="entry name" value="Phe_tRNA-synt_N"/>
    <property type="match status" value="1"/>
</dbReference>
<dbReference type="Pfam" id="PF01409">
    <property type="entry name" value="tRNA-synt_2d"/>
    <property type="match status" value="1"/>
</dbReference>
<dbReference type="SUPFAM" id="SSF55681">
    <property type="entry name" value="Class II aaRS and biotin synthetases"/>
    <property type="match status" value="1"/>
</dbReference>
<dbReference type="SUPFAM" id="SSF46589">
    <property type="entry name" value="tRNA-binding arm"/>
    <property type="match status" value="1"/>
</dbReference>
<dbReference type="PROSITE" id="PS50862">
    <property type="entry name" value="AA_TRNA_LIGASE_II"/>
    <property type="match status" value="1"/>
</dbReference>
<organism>
    <name type="scientific">Photorhabdus laumondii subsp. laumondii (strain DSM 15139 / CIP 105565 / TT01)</name>
    <name type="common">Photorhabdus luminescens subsp. laumondii</name>
    <dbReference type="NCBI Taxonomy" id="243265"/>
    <lineage>
        <taxon>Bacteria</taxon>
        <taxon>Pseudomonadati</taxon>
        <taxon>Pseudomonadota</taxon>
        <taxon>Gammaproteobacteria</taxon>
        <taxon>Enterobacterales</taxon>
        <taxon>Morganellaceae</taxon>
        <taxon>Photorhabdus</taxon>
    </lineage>
</organism>
<sequence>MPHLAELVANARAAIEDAQDVAALDLVRVEYLGKKGHLTLQMSSLRDLPVEERPAAGAVINQVKQEVQEALNIRKEKLETDLLNFRLAAEKIDVSLPGRRMENGGLHPVNRTIERIETFFGELGFSIESGPEIEDDYHNFDALNIPAHHPARADHDTFWFDAKRLLRTQTSGVQVRTMHSQQPPIRVIAPGRVYRNDYDQTHTPMFHQVEGLIIDRDISFTSLKGTLHDFLTNFFEEDLQVRFRPSYFPFTEPSAEVDVMGKNGKWLEVLGCGMVHPNVLHNVGLDPEIYSGFAFGMGVERLTMLRYGVTDLRAFFENDLRFLKQFK</sequence>
<accession>Q7N3Q0</accession>
<comment type="catalytic activity">
    <reaction evidence="1">
        <text>tRNA(Phe) + L-phenylalanine + ATP = L-phenylalanyl-tRNA(Phe) + AMP + diphosphate + H(+)</text>
        <dbReference type="Rhea" id="RHEA:19413"/>
        <dbReference type="Rhea" id="RHEA-COMP:9668"/>
        <dbReference type="Rhea" id="RHEA-COMP:9699"/>
        <dbReference type="ChEBI" id="CHEBI:15378"/>
        <dbReference type="ChEBI" id="CHEBI:30616"/>
        <dbReference type="ChEBI" id="CHEBI:33019"/>
        <dbReference type="ChEBI" id="CHEBI:58095"/>
        <dbReference type="ChEBI" id="CHEBI:78442"/>
        <dbReference type="ChEBI" id="CHEBI:78531"/>
        <dbReference type="ChEBI" id="CHEBI:456215"/>
        <dbReference type="EC" id="6.1.1.20"/>
    </reaction>
</comment>
<comment type="cofactor">
    <cofactor evidence="1">
        <name>Mg(2+)</name>
        <dbReference type="ChEBI" id="CHEBI:18420"/>
    </cofactor>
    <text evidence="1">Binds 2 magnesium ions per tetramer.</text>
</comment>
<comment type="subunit">
    <text evidence="1">Tetramer of two alpha and two beta subunits.</text>
</comment>
<comment type="subcellular location">
    <subcellularLocation>
        <location evidence="1">Cytoplasm</location>
    </subcellularLocation>
</comment>
<comment type="similarity">
    <text evidence="1">Belongs to the class-II aminoacyl-tRNA synthetase family. Phe-tRNA synthetase alpha subunit type 1 subfamily.</text>
</comment>
<protein>
    <recommendedName>
        <fullName evidence="1">Phenylalanine--tRNA ligase alpha subunit</fullName>
        <ecNumber evidence="1">6.1.1.20</ecNumber>
    </recommendedName>
    <alternativeName>
        <fullName evidence="1">Phenylalanyl-tRNA synthetase alpha subunit</fullName>
        <shortName evidence="1">PheRS</shortName>
    </alternativeName>
</protein>
<evidence type="ECO:0000255" key="1">
    <source>
        <dbReference type="HAMAP-Rule" id="MF_00281"/>
    </source>
</evidence>
<keyword id="KW-0030">Aminoacyl-tRNA synthetase</keyword>
<keyword id="KW-0067">ATP-binding</keyword>
<keyword id="KW-0963">Cytoplasm</keyword>
<keyword id="KW-0436">Ligase</keyword>
<keyword id="KW-0460">Magnesium</keyword>
<keyword id="KW-0479">Metal-binding</keyword>
<keyword id="KW-0547">Nucleotide-binding</keyword>
<keyword id="KW-0648">Protein biosynthesis</keyword>
<keyword id="KW-1185">Reference proteome</keyword>
<reference key="1">
    <citation type="journal article" date="2003" name="Nat. Biotechnol.">
        <title>The genome sequence of the entomopathogenic bacterium Photorhabdus luminescens.</title>
        <authorList>
            <person name="Duchaud E."/>
            <person name="Rusniok C."/>
            <person name="Frangeul L."/>
            <person name="Buchrieser C."/>
            <person name="Givaudan A."/>
            <person name="Taourit S."/>
            <person name="Bocs S."/>
            <person name="Boursaux-Eude C."/>
            <person name="Chandler M."/>
            <person name="Charles J.-F."/>
            <person name="Dassa E."/>
            <person name="Derose R."/>
            <person name="Derzelle S."/>
            <person name="Freyssinet G."/>
            <person name="Gaudriault S."/>
            <person name="Medigue C."/>
            <person name="Lanois A."/>
            <person name="Powell K."/>
            <person name="Siguier P."/>
            <person name="Vincent R."/>
            <person name="Wingate V."/>
            <person name="Zouine M."/>
            <person name="Glaser P."/>
            <person name="Boemare N."/>
            <person name="Danchin A."/>
            <person name="Kunst F."/>
        </authorList>
    </citation>
    <scope>NUCLEOTIDE SEQUENCE [LARGE SCALE GENOMIC DNA]</scope>
    <source>
        <strain>DSM 15139 / CIP 105565 / TT01</strain>
    </source>
</reference>